<accession>Q8P3D7</accession>
<gene>
    <name evidence="1" type="primary">pyrF</name>
    <name type="ordered locus">XCC4134</name>
</gene>
<keyword id="KW-0210">Decarboxylase</keyword>
<keyword id="KW-0456">Lyase</keyword>
<keyword id="KW-0665">Pyrimidine biosynthesis</keyword>
<keyword id="KW-1185">Reference proteome</keyword>
<sequence>MNRPPLPLAAHDRLIFALDVPGHDEAIAWVDRLGESVAFYKIGMELLASGEYFHVLDALAKRNKRVFVDLKFFDIPATVAGTIRRLSQWPVSYCTVHGWHAGMLEAAAAANQGDMRLLAVTVLTSMGRPDLAAMGIDREPVDVVVERALAAQAAGIDGVIASGQEAGMIRRATGPAFSIVCPGIRPGGPVGDDQQRTVGVAQAFADGADAIVVGRPIRLANDPAAAAAAIQAEIRAAVVQHRD</sequence>
<proteinExistence type="inferred from homology"/>
<name>PYRF_XANCP</name>
<protein>
    <recommendedName>
        <fullName evidence="1">Orotidine 5'-phosphate decarboxylase</fullName>
        <ecNumber evidence="1">4.1.1.23</ecNumber>
    </recommendedName>
    <alternativeName>
        <fullName evidence="1">OMP decarboxylase</fullName>
        <shortName evidence="1">OMPDCase</shortName>
        <shortName evidence="1">OMPdecase</shortName>
    </alternativeName>
</protein>
<reference key="1">
    <citation type="journal article" date="2002" name="Nature">
        <title>Comparison of the genomes of two Xanthomonas pathogens with differing host specificities.</title>
        <authorList>
            <person name="da Silva A.C.R."/>
            <person name="Ferro J.A."/>
            <person name="Reinach F.C."/>
            <person name="Farah C.S."/>
            <person name="Furlan L.R."/>
            <person name="Quaggio R.B."/>
            <person name="Monteiro-Vitorello C.B."/>
            <person name="Van Sluys M.A."/>
            <person name="Almeida N.F. Jr."/>
            <person name="Alves L.M.C."/>
            <person name="do Amaral A.M."/>
            <person name="Bertolini M.C."/>
            <person name="Camargo L.E.A."/>
            <person name="Camarotte G."/>
            <person name="Cannavan F."/>
            <person name="Cardozo J."/>
            <person name="Chambergo F."/>
            <person name="Ciapina L.P."/>
            <person name="Cicarelli R.M.B."/>
            <person name="Coutinho L.L."/>
            <person name="Cursino-Santos J.R."/>
            <person name="El-Dorry H."/>
            <person name="Faria J.B."/>
            <person name="Ferreira A.J.S."/>
            <person name="Ferreira R.C.C."/>
            <person name="Ferro M.I.T."/>
            <person name="Formighieri E.F."/>
            <person name="Franco M.C."/>
            <person name="Greggio C.C."/>
            <person name="Gruber A."/>
            <person name="Katsuyama A.M."/>
            <person name="Kishi L.T."/>
            <person name="Leite R.P."/>
            <person name="Lemos E.G.M."/>
            <person name="Lemos M.V.F."/>
            <person name="Locali E.C."/>
            <person name="Machado M.A."/>
            <person name="Madeira A.M.B.N."/>
            <person name="Martinez-Rossi N.M."/>
            <person name="Martins E.C."/>
            <person name="Meidanis J."/>
            <person name="Menck C.F.M."/>
            <person name="Miyaki C.Y."/>
            <person name="Moon D.H."/>
            <person name="Moreira L.M."/>
            <person name="Novo M.T.M."/>
            <person name="Okura V.K."/>
            <person name="Oliveira M.C."/>
            <person name="Oliveira V.R."/>
            <person name="Pereira H.A."/>
            <person name="Rossi A."/>
            <person name="Sena J.A.D."/>
            <person name="Silva C."/>
            <person name="de Souza R.F."/>
            <person name="Spinola L.A.F."/>
            <person name="Takita M.A."/>
            <person name="Tamura R.E."/>
            <person name="Teixeira E.C."/>
            <person name="Tezza R.I.D."/>
            <person name="Trindade dos Santos M."/>
            <person name="Truffi D."/>
            <person name="Tsai S.M."/>
            <person name="White F.F."/>
            <person name="Setubal J.C."/>
            <person name="Kitajima J.P."/>
        </authorList>
    </citation>
    <scope>NUCLEOTIDE SEQUENCE [LARGE SCALE GENOMIC DNA]</scope>
    <source>
        <strain>ATCC 33913 / DSM 3586 / NCPPB 528 / LMG 568 / P 25</strain>
    </source>
</reference>
<comment type="function">
    <text evidence="1">Catalyzes the decarboxylation of orotidine 5'-monophosphate (OMP) to uridine 5'-monophosphate (UMP).</text>
</comment>
<comment type="catalytic activity">
    <reaction evidence="1">
        <text>orotidine 5'-phosphate + H(+) = UMP + CO2</text>
        <dbReference type="Rhea" id="RHEA:11596"/>
        <dbReference type="ChEBI" id="CHEBI:15378"/>
        <dbReference type="ChEBI" id="CHEBI:16526"/>
        <dbReference type="ChEBI" id="CHEBI:57538"/>
        <dbReference type="ChEBI" id="CHEBI:57865"/>
        <dbReference type="EC" id="4.1.1.23"/>
    </reaction>
</comment>
<comment type="pathway">
    <text evidence="1">Pyrimidine metabolism; UMP biosynthesis via de novo pathway; UMP from orotate: step 2/2.</text>
</comment>
<comment type="subunit">
    <text evidence="1">Homodimer.</text>
</comment>
<comment type="similarity">
    <text evidence="1">Belongs to the OMP decarboxylase family. Type 1 subfamily.</text>
</comment>
<dbReference type="EC" id="4.1.1.23" evidence="1"/>
<dbReference type="EMBL" id="AE008922">
    <property type="protein sequence ID" value="AAM43355.1"/>
    <property type="molecule type" value="Genomic_DNA"/>
</dbReference>
<dbReference type="RefSeq" id="NP_639473.1">
    <property type="nucleotide sequence ID" value="NC_003902.1"/>
</dbReference>
<dbReference type="RefSeq" id="WP_011039203.1">
    <property type="nucleotide sequence ID" value="NC_003902.1"/>
</dbReference>
<dbReference type="SMR" id="Q8P3D7"/>
<dbReference type="STRING" id="190485.XCC4134"/>
<dbReference type="EnsemblBacteria" id="AAM43355">
    <property type="protein sequence ID" value="AAM43355"/>
    <property type="gene ID" value="XCC4134"/>
</dbReference>
<dbReference type="KEGG" id="xcc:XCC4134"/>
<dbReference type="PATRIC" id="fig|190485.4.peg.4429"/>
<dbReference type="eggNOG" id="COG0284">
    <property type="taxonomic scope" value="Bacteria"/>
</dbReference>
<dbReference type="HOGENOM" id="CLU_067069_1_0_6"/>
<dbReference type="OrthoDB" id="9806203at2"/>
<dbReference type="UniPathway" id="UPA00070">
    <property type="reaction ID" value="UER00120"/>
</dbReference>
<dbReference type="Proteomes" id="UP000001010">
    <property type="component" value="Chromosome"/>
</dbReference>
<dbReference type="GO" id="GO:0005829">
    <property type="term" value="C:cytosol"/>
    <property type="evidence" value="ECO:0000318"/>
    <property type="project" value="GO_Central"/>
</dbReference>
<dbReference type="GO" id="GO:0004590">
    <property type="term" value="F:orotidine-5'-phosphate decarboxylase activity"/>
    <property type="evidence" value="ECO:0000318"/>
    <property type="project" value="GO_Central"/>
</dbReference>
<dbReference type="GO" id="GO:0006207">
    <property type="term" value="P:'de novo' pyrimidine nucleobase biosynthetic process"/>
    <property type="evidence" value="ECO:0000318"/>
    <property type="project" value="GO_Central"/>
</dbReference>
<dbReference type="GO" id="GO:0044205">
    <property type="term" value="P:'de novo' UMP biosynthetic process"/>
    <property type="evidence" value="ECO:0007669"/>
    <property type="project" value="UniProtKB-UniRule"/>
</dbReference>
<dbReference type="CDD" id="cd04725">
    <property type="entry name" value="OMP_decarboxylase_like"/>
    <property type="match status" value="1"/>
</dbReference>
<dbReference type="FunFam" id="3.20.20.70:FF:000235">
    <property type="entry name" value="Orotidine 5'-phosphate decarboxylase"/>
    <property type="match status" value="1"/>
</dbReference>
<dbReference type="Gene3D" id="3.20.20.70">
    <property type="entry name" value="Aldolase class I"/>
    <property type="match status" value="1"/>
</dbReference>
<dbReference type="HAMAP" id="MF_01200_B">
    <property type="entry name" value="OMPdecase_type1_B"/>
    <property type="match status" value="1"/>
</dbReference>
<dbReference type="InterPro" id="IPR013785">
    <property type="entry name" value="Aldolase_TIM"/>
</dbReference>
<dbReference type="InterPro" id="IPR014732">
    <property type="entry name" value="OMPdecase"/>
</dbReference>
<dbReference type="InterPro" id="IPR018089">
    <property type="entry name" value="OMPdecase_AS"/>
</dbReference>
<dbReference type="InterPro" id="IPR047596">
    <property type="entry name" value="OMPdecase_bac"/>
</dbReference>
<dbReference type="InterPro" id="IPR001754">
    <property type="entry name" value="OMPdeCOase_dom"/>
</dbReference>
<dbReference type="InterPro" id="IPR011060">
    <property type="entry name" value="RibuloseP-bd_barrel"/>
</dbReference>
<dbReference type="NCBIfam" id="NF001273">
    <property type="entry name" value="PRK00230.1"/>
    <property type="match status" value="1"/>
</dbReference>
<dbReference type="NCBIfam" id="TIGR01740">
    <property type="entry name" value="pyrF"/>
    <property type="match status" value="1"/>
</dbReference>
<dbReference type="PANTHER" id="PTHR32119">
    <property type="entry name" value="OROTIDINE 5'-PHOSPHATE DECARBOXYLASE"/>
    <property type="match status" value="1"/>
</dbReference>
<dbReference type="PANTHER" id="PTHR32119:SF2">
    <property type="entry name" value="OROTIDINE 5'-PHOSPHATE DECARBOXYLASE"/>
    <property type="match status" value="1"/>
</dbReference>
<dbReference type="Pfam" id="PF00215">
    <property type="entry name" value="OMPdecase"/>
    <property type="match status" value="1"/>
</dbReference>
<dbReference type="SMART" id="SM00934">
    <property type="entry name" value="OMPdecase"/>
    <property type="match status" value="1"/>
</dbReference>
<dbReference type="SUPFAM" id="SSF51366">
    <property type="entry name" value="Ribulose-phoshate binding barrel"/>
    <property type="match status" value="1"/>
</dbReference>
<dbReference type="PROSITE" id="PS00156">
    <property type="entry name" value="OMPDECASE"/>
    <property type="match status" value="1"/>
</dbReference>
<evidence type="ECO:0000255" key="1">
    <source>
        <dbReference type="HAMAP-Rule" id="MF_01200"/>
    </source>
</evidence>
<organism>
    <name type="scientific">Xanthomonas campestris pv. campestris (strain ATCC 33913 / DSM 3586 / NCPPB 528 / LMG 568 / P 25)</name>
    <dbReference type="NCBI Taxonomy" id="190485"/>
    <lineage>
        <taxon>Bacteria</taxon>
        <taxon>Pseudomonadati</taxon>
        <taxon>Pseudomonadota</taxon>
        <taxon>Gammaproteobacteria</taxon>
        <taxon>Lysobacterales</taxon>
        <taxon>Lysobacteraceae</taxon>
        <taxon>Xanthomonas</taxon>
    </lineage>
</organism>
<feature type="chain" id="PRO_0000134603" description="Orotidine 5'-phosphate decarboxylase">
    <location>
        <begin position="1"/>
        <end position="243"/>
    </location>
</feature>
<feature type="active site" description="Proton donor" evidence="1">
    <location>
        <position position="71"/>
    </location>
</feature>
<feature type="binding site" evidence="1">
    <location>
        <position position="19"/>
    </location>
    <ligand>
        <name>substrate</name>
    </ligand>
</feature>
<feature type="binding site" evidence="1">
    <location>
        <position position="41"/>
    </location>
    <ligand>
        <name>substrate</name>
    </ligand>
</feature>
<feature type="binding site" evidence="1">
    <location>
        <begin position="69"/>
        <end position="78"/>
    </location>
    <ligand>
        <name>substrate</name>
    </ligand>
</feature>
<feature type="binding site" evidence="1">
    <location>
        <position position="124"/>
    </location>
    <ligand>
        <name>substrate</name>
    </ligand>
</feature>
<feature type="binding site" evidence="1">
    <location>
        <position position="185"/>
    </location>
    <ligand>
        <name>substrate</name>
    </ligand>
</feature>
<feature type="binding site" evidence="1">
    <location>
        <position position="194"/>
    </location>
    <ligand>
        <name>substrate</name>
    </ligand>
</feature>
<feature type="binding site" evidence="1">
    <location>
        <position position="214"/>
    </location>
    <ligand>
        <name>substrate</name>
    </ligand>
</feature>
<feature type="binding site" evidence="1">
    <location>
        <position position="215"/>
    </location>
    <ligand>
        <name>substrate</name>
    </ligand>
</feature>